<reference key="1">
    <citation type="journal article" date="1997" name="Nature">
        <title>The complete genome sequence of the gastric pathogen Helicobacter pylori.</title>
        <authorList>
            <person name="Tomb J.-F."/>
            <person name="White O."/>
            <person name="Kerlavage A.R."/>
            <person name="Clayton R.A."/>
            <person name="Sutton G.G."/>
            <person name="Fleischmann R.D."/>
            <person name="Ketchum K.A."/>
            <person name="Klenk H.-P."/>
            <person name="Gill S.R."/>
            <person name="Dougherty B.A."/>
            <person name="Nelson K.E."/>
            <person name="Quackenbush J."/>
            <person name="Zhou L."/>
            <person name="Kirkness E.F."/>
            <person name="Peterson S.N."/>
            <person name="Loftus B.J."/>
            <person name="Richardson D.L."/>
            <person name="Dodson R.J."/>
            <person name="Khalak H.G."/>
            <person name="Glodek A."/>
            <person name="McKenney K."/>
            <person name="FitzGerald L.M."/>
            <person name="Lee N."/>
            <person name="Adams M.D."/>
            <person name="Hickey E.K."/>
            <person name="Berg D.E."/>
            <person name="Gocayne J.D."/>
            <person name="Utterback T.R."/>
            <person name="Peterson J.D."/>
            <person name="Kelley J.M."/>
            <person name="Cotton M.D."/>
            <person name="Weidman J.F."/>
            <person name="Fujii C."/>
            <person name="Bowman C."/>
            <person name="Watthey L."/>
            <person name="Wallin E."/>
            <person name="Hayes W.S."/>
            <person name="Borodovsky M."/>
            <person name="Karp P.D."/>
            <person name="Smith H.O."/>
            <person name="Fraser C.M."/>
            <person name="Venter J.C."/>
        </authorList>
    </citation>
    <scope>NUCLEOTIDE SEQUENCE [LARGE SCALE GENOMIC DNA]</scope>
    <source>
        <strain>ATCC 700392 / 26695</strain>
    </source>
</reference>
<reference key="2">
    <citation type="journal article" date="2002" name="Proteomics">
        <title>Immunoproteomics of Helicobacter pylori infection and relation to gastric disease.</title>
        <authorList>
            <person name="Haas G."/>
            <person name="Karaali G."/>
            <person name="Ebermayer K."/>
            <person name="Metzger W.G."/>
            <person name="Lamer S."/>
            <person name="Zimny-Arndt U."/>
            <person name="Diescher S."/>
            <person name="Goebel U.B."/>
            <person name="Vogt K."/>
            <person name="Roznowski A.B."/>
            <person name="Wiedenmann B.J."/>
            <person name="Meyer T.F."/>
            <person name="Aebischer T."/>
            <person name="Jungblut P.R."/>
        </authorList>
    </citation>
    <scope>ANTIGENICITY</scope>
</reference>
<reference key="3">
    <citation type="journal article" date="2003" name="Clin. Diagn. Lab. Immunol.">
        <title>Detection of high titers of antibody against Helicobacter cysteine-rich proteins A, B, C, and E in Helicobacter pylori-infected individuals.</title>
        <authorList>
            <person name="Mittl P.R.E."/>
            <person name="Luethy L."/>
            <person name="Reinhardt C."/>
            <person name="Joller H."/>
        </authorList>
    </citation>
    <scope>ANTIGENICITY</scope>
</reference>
<reference key="4">
    <citation type="journal article" date="2004" name="J. Mol. Biol.">
        <title>The crystal structure of Helicobacter cysteine-rich protein C at 2.0 A resolution: similar peptide-binding sites in TPR and SEL1-like repeat proteins.</title>
        <authorList>
            <person name="Luethy L."/>
            <person name="Grutter M.G."/>
            <person name="Mittl P.R.E."/>
        </authorList>
    </citation>
    <scope>X-RAY CRYSTALLOGRAPHY (2.0 ANGSTROMS) OF 24-290</scope>
    <scope>DISULFIDE BONDS</scope>
</reference>
<organism>
    <name type="scientific">Helicobacter pylori (strain ATCC 700392 / 26695)</name>
    <name type="common">Campylobacter pylori</name>
    <dbReference type="NCBI Taxonomy" id="85962"/>
    <lineage>
        <taxon>Bacteria</taxon>
        <taxon>Pseudomonadati</taxon>
        <taxon>Campylobacterota</taxon>
        <taxon>Epsilonproteobacteria</taxon>
        <taxon>Campylobacterales</taxon>
        <taxon>Helicobacteraceae</taxon>
        <taxon>Helicobacter</taxon>
    </lineage>
</organism>
<keyword id="KW-0002">3D-structure</keyword>
<keyword id="KW-0046">Antibiotic resistance</keyword>
<keyword id="KW-1015">Disulfide bond</keyword>
<keyword id="KW-0378">Hydrolase</keyword>
<keyword id="KW-1185">Reference proteome</keyword>
<keyword id="KW-0677">Repeat</keyword>
<keyword id="KW-0964">Secreted</keyword>
<keyword id="KW-0732">Signal</keyword>
<keyword id="KW-0802">TPR repeat</keyword>
<feature type="signal peptide" evidence="2">
    <location>
        <begin position="1"/>
        <end position="25"/>
    </location>
</feature>
<feature type="chain" id="PRO_0000013196" description="Putative beta-lactamase HcpC">
    <location>
        <begin position="26"/>
        <end position="290"/>
    </location>
</feature>
<feature type="repeat" description="TPR 1">
    <location>
        <begin position="29"/>
        <end position="62"/>
    </location>
</feature>
<feature type="repeat" description="TPR 2">
    <location>
        <begin position="64"/>
        <end position="98"/>
    </location>
</feature>
<feature type="repeat" description="TPR 3">
    <location>
        <begin position="100"/>
        <end position="133"/>
    </location>
</feature>
<feature type="repeat" description="TPR 4">
    <location>
        <begin position="134"/>
        <end position="170"/>
    </location>
</feature>
<feature type="repeat" description="TPR 5">
    <location>
        <begin position="172"/>
        <end position="205"/>
    </location>
</feature>
<feature type="repeat" description="TPR 6">
    <location>
        <begin position="206"/>
        <end position="242"/>
    </location>
</feature>
<feature type="repeat" description="TPR 7">
    <location>
        <begin position="244"/>
        <end position="278"/>
    </location>
</feature>
<feature type="disulfide bond" evidence="3">
    <location>
        <begin position="56"/>
        <end position="64"/>
    </location>
</feature>
<feature type="disulfide bond" evidence="3">
    <location>
        <begin position="92"/>
        <end position="100"/>
    </location>
</feature>
<feature type="disulfide bond" evidence="3">
    <location>
        <begin position="128"/>
        <end position="136"/>
    </location>
</feature>
<feature type="disulfide bond" evidence="3">
    <location>
        <begin position="164"/>
        <end position="172"/>
    </location>
</feature>
<feature type="disulfide bond" evidence="3">
    <location>
        <begin position="200"/>
        <end position="208"/>
    </location>
</feature>
<feature type="disulfide bond" evidence="3">
    <location>
        <begin position="236"/>
        <end position="244"/>
    </location>
</feature>
<feature type="disulfide bond" evidence="3">
    <location>
        <begin position="272"/>
        <end position="280"/>
    </location>
</feature>
<feature type="helix" evidence="5">
    <location>
        <begin position="29"/>
        <end position="41"/>
    </location>
</feature>
<feature type="helix" evidence="5">
    <location>
        <begin position="45"/>
        <end position="57"/>
    </location>
</feature>
<feature type="helix" evidence="5">
    <location>
        <begin position="61"/>
        <end position="73"/>
    </location>
</feature>
<feature type="strand" evidence="5">
    <location>
        <begin position="75"/>
        <end position="77"/>
    </location>
</feature>
<feature type="helix" evidence="5">
    <location>
        <begin position="81"/>
        <end position="93"/>
    </location>
</feature>
<feature type="helix" evidence="5">
    <location>
        <begin position="97"/>
        <end position="109"/>
    </location>
</feature>
<feature type="strand" evidence="5">
    <location>
        <begin position="111"/>
        <end position="113"/>
    </location>
</feature>
<feature type="helix" evidence="5">
    <location>
        <begin position="117"/>
        <end position="129"/>
    </location>
</feature>
<feature type="helix" evidence="5">
    <location>
        <begin position="133"/>
        <end position="145"/>
    </location>
</feature>
<feature type="strand" evidence="5">
    <location>
        <begin position="147"/>
        <end position="149"/>
    </location>
</feature>
<feature type="helix" evidence="5">
    <location>
        <begin position="153"/>
        <end position="165"/>
    </location>
</feature>
<feature type="helix" evidence="5">
    <location>
        <begin position="169"/>
        <end position="181"/>
    </location>
</feature>
<feature type="strand" evidence="5">
    <location>
        <begin position="183"/>
        <end position="185"/>
    </location>
</feature>
<feature type="helix" evidence="5">
    <location>
        <begin position="189"/>
        <end position="201"/>
    </location>
</feature>
<feature type="helix" evidence="5">
    <location>
        <begin position="205"/>
        <end position="217"/>
    </location>
</feature>
<feature type="helix" evidence="5">
    <location>
        <begin position="225"/>
        <end position="237"/>
    </location>
</feature>
<feature type="helix" evidence="5">
    <location>
        <begin position="241"/>
        <end position="252"/>
    </location>
</feature>
<feature type="strand" evidence="5">
    <location>
        <begin position="255"/>
        <end position="258"/>
    </location>
</feature>
<feature type="helix" evidence="5">
    <location>
        <begin position="264"/>
        <end position="274"/>
    </location>
</feature>
<feature type="helix" evidence="5">
    <location>
        <begin position="277"/>
        <end position="284"/>
    </location>
</feature>
<proteinExistence type="evidence at protein level"/>
<protein>
    <recommendedName>
        <fullName>Putative beta-lactamase HcpC</fullName>
        <ecNumber>3.5.2.6</ecNumber>
    </recommendedName>
    <alternativeName>
        <fullName>Cysteine-rich protein C</fullName>
    </alternativeName>
</protein>
<dbReference type="EC" id="3.5.2.6"/>
<dbReference type="EMBL" id="AE000511">
    <property type="protein sequence ID" value="AAD08141.1"/>
    <property type="molecule type" value="Genomic_DNA"/>
</dbReference>
<dbReference type="PIR" id="B64657">
    <property type="entry name" value="B64657"/>
</dbReference>
<dbReference type="RefSeq" id="NP_207889.1">
    <property type="nucleotide sequence ID" value="NC_000915.1"/>
</dbReference>
<dbReference type="RefSeq" id="WP_000892717.1">
    <property type="nucleotide sequence ID" value="NC_018939.1"/>
</dbReference>
<dbReference type="PDB" id="1OUV">
    <property type="method" value="X-ray"/>
    <property type="resolution" value="2.00 A"/>
    <property type="chains" value="A=24-290"/>
</dbReference>
<dbReference type="PDBsum" id="1OUV"/>
<dbReference type="SMR" id="O25728"/>
<dbReference type="DIP" id="DIP-3502N"/>
<dbReference type="IntAct" id="O25728">
    <property type="interactions" value="1"/>
</dbReference>
<dbReference type="MINT" id="O25728"/>
<dbReference type="STRING" id="85962.HP_1098"/>
<dbReference type="PaxDb" id="85962-C694_05665"/>
<dbReference type="EnsemblBacteria" id="AAD08141">
    <property type="protein sequence ID" value="AAD08141"/>
    <property type="gene ID" value="HP_1098"/>
</dbReference>
<dbReference type="KEGG" id="heo:C694_05665"/>
<dbReference type="KEGG" id="hpy:HP_1098"/>
<dbReference type="PATRIC" id="fig|85962.47.peg.1178"/>
<dbReference type="eggNOG" id="COG0790">
    <property type="taxonomic scope" value="Bacteria"/>
</dbReference>
<dbReference type="InParanoid" id="O25728"/>
<dbReference type="OrthoDB" id="5330140at2"/>
<dbReference type="PhylomeDB" id="O25728"/>
<dbReference type="EvolutionaryTrace" id="O25728"/>
<dbReference type="Proteomes" id="UP000000429">
    <property type="component" value="Chromosome"/>
</dbReference>
<dbReference type="GO" id="GO:0005576">
    <property type="term" value="C:extracellular region"/>
    <property type="evidence" value="ECO:0007669"/>
    <property type="project" value="UniProtKB-SubCell"/>
</dbReference>
<dbReference type="GO" id="GO:0008800">
    <property type="term" value="F:beta-lactamase activity"/>
    <property type="evidence" value="ECO:0007669"/>
    <property type="project" value="UniProtKB-EC"/>
</dbReference>
<dbReference type="GO" id="GO:0046677">
    <property type="term" value="P:response to antibiotic"/>
    <property type="evidence" value="ECO:0007669"/>
    <property type="project" value="UniProtKB-KW"/>
</dbReference>
<dbReference type="Gene3D" id="1.25.40.10">
    <property type="entry name" value="Tetratricopeptide repeat domain"/>
    <property type="match status" value="1"/>
</dbReference>
<dbReference type="InterPro" id="IPR040239">
    <property type="entry name" value="HcpB-like"/>
</dbReference>
<dbReference type="InterPro" id="IPR006597">
    <property type="entry name" value="Sel1-like"/>
</dbReference>
<dbReference type="InterPro" id="IPR011990">
    <property type="entry name" value="TPR-like_helical_dom_sf"/>
</dbReference>
<dbReference type="InterPro" id="IPR019734">
    <property type="entry name" value="TPR_rpt"/>
</dbReference>
<dbReference type="PANTHER" id="PTHR13891">
    <property type="entry name" value="CYTOCHROME C OXIDASE ASSEMBLY FACTOR 7"/>
    <property type="match status" value="1"/>
</dbReference>
<dbReference type="PANTHER" id="PTHR13891:SF1">
    <property type="entry name" value="CYTOCHROME C OXIDASE ASSEMBLY FACTOR 7"/>
    <property type="match status" value="1"/>
</dbReference>
<dbReference type="Pfam" id="PF08238">
    <property type="entry name" value="Sel1"/>
    <property type="match status" value="7"/>
</dbReference>
<dbReference type="SMART" id="SM00671">
    <property type="entry name" value="SEL1"/>
    <property type="match status" value="7"/>
</dbReference>
<dbReference type="SMART" id="SM00028">
    <property type="entry name" value="TPR"/>
    <property type="match status" value="3"/>
</dbReference>
<dbReference type="SUPFAM" id="SSF81901">
    <property type="entry name" value="HCP-like"/>
    <property type="match status" value="1"/>
</dbReference>
<dbReference type="PROSITE" id="PS50005">
    <property type="entry name" value="TPR"/>
    <property type="match status" value="1"/>
</dbReference>
<gene>
    <name type="primary">hcpC</name>
    <name type="ordered locus">HP_1098</name>
</gene>
<accession>O25728</accession>
<comment type="function">
    <text evidence="1">May hydrolyze 6-aminopenicillinic acid and 7-aminocephalosporanic acid (ACA) derivatives.</text>
</comment>
<comment type="catalytic activity">
    <reaction>
        <text>a beta-lactam + H2O = a substituted beta-amino acid</text>
        <dbReference type="Rhea" id="RHEA:20401"/>
        <dbReference type="ChEBI" id="CHEBI:15377"/>
        <dbReference type="ChEBI" id="CHEBI:35627"/>
        <dbReference type="ChEBI" id="CHEBI:140347"/>
        <dbReference type="EC" id="3.5.2.6"/>
    </reaction>
</comment>
<comment type="subcellular location">
    <subcellularLocation>
        <location evidence="4">Secreted</location>
    </subcellularLocation>
</comment>
<comment type="miscellaneous">
    <text>Antibodies against HcpC are present in sera from human patients infected by Helicobacter pylori.</text>
</comment>
<comment type="similarity">
    <text evidence="4">Belongs to the hcp beta-lactamase family.</text>
</comment>
<sequence length="290" mass="31594">MLENVKKSFFRVLCLGALCLGGLMAEQDPKELVGLGAKSYKEKDFTQAKKYFEKACDLKENSGCFNLGVLYYQGQGVEKNLKKAASFYAKACDLNYSNGCHLLGNLYYSGQGVSQNTNKALQYYSKACDLKYAEGCASLGGIYHDGKVVTRDFKKAVEYFTKACDLNDGDGCTILGSLYDAGRGTPKDLKKALASYDKACDLKDSPGCFNAGNMYHHGEGATKNFKEALARYSKACELENGGGCFNLGAMQYNGEGVTRNEKQAIENFKKGCKLGAKGACDILKQLKIKV</sequence>
<evidence type="ECO:0000250" key="1"/>
<evidence type="ECO:0000255" key="2"/>
<evidence type="ECO:0000269" key="3">
    <source>
    </source>
</evidence>
<evidence type="ECO:0000305" key="4"/>
<evidence type="ECO:0007829" key="5">
    <source>
        <dbReference type="PDB" id="1OUV"/>
    </source>
</evidence>
<name>HCPC_HELPY</name>